<reference key="1">
    <citation type="journal article" date="2009" name="Environ. Microbiol.">
        <title>The genome of Polaromonas naphthalenivorans strain CJ2, isolated from coal tar-contaminated sediment, reveals physiological and metabolic versatility and evolution through extensive horizontal gene transfer.</title>
        <authorList>
            <person name="Yagi J.M."/>
            <person name="Sims D."/>
            <person name="Brettin T."/>
            <person name="Bruce D."/>
            <person name="Madsen E.L."/>
        </authorList>
    </citation>
    <scope>NUCLEOTIDE SEQUENCE [LARGE SCALE GENOMIC DNA]</scope>
    <source>
        <strain>CJ2</strain>
    </source>
</reference>
<name>RS21_POLNA</name>
<organism>
    <name type="scientific">Polaromonas naphthalenivorans (strain CJ2)</name>
    <dbReference type="NCBI Taxonomy" id="365044"/>
    <lineage>
        <taxon>Bacteria</taxon>
        <taxon>Pseudomonadati</taxon>
        <taxon>Pseudomonadota</taxon>
        <taxon>Betaproteobacteria</taxon>
        <taxon>Burkholderiales</taxon>
        <taxon>Comamonadaceae</taxon>
        <taxon>Polaromonas</taxon>
    </lineage>
</organism>
<accession>A1VM24</accession>
<feature type="chain" id="PRO_1000005148" description="Small ribosomal subunit protein bS21">
    <location>
        <begin position="1"/>
        <end position="70"/>
    </location>
</feature>
<gene>
    <name evidence="1" type="primary">rpsU</name>
    <name type="ordered locus">Pnap_1388</name>
</gene>
<protein>
    <recommendedName>
        <fullName evidence="1">Small ribosomal subunit protein bS21</fullName>
    </recommendedName>
    <alternativeName>
        <fullName evidence="2">30S ribosomal protein S21</fullName>
    </alternativeName>
</protein>
<sequence>MTTIRVKDNEPFDVALRRFKRTIEKLGLLTDLRAREFYEKPTAERKRKKAAAVKRNYKRIRAMQLPKKLY</sequence>
<dbReference type="EMBL" id="CP000529">
    <property type="protein sequence ID" value="ABM36702.1"/>
    <property type="molecule type" value="Genomic_DNA"/>
</dbReference>
<dbReference type="RefSeq" id="WP_011484193.1">
    <property type="nucleotide sequence ID" value="NC_008781.1"/>
</dbReference>
<dbReference type="SMR" id="A1VM24"/>
<dbReference type="STRING" id="365044.Pnap_1388"/>
<dbReference type="KEGG" id="pna:Pnap_1388"/>
<dbReference type="eggNOG" id="COG0828">
    <property type="taxonomic scope" value="Bacteria"/>
</dbReference>
<dbReference type="HOGENOM" id="CLU_159258_1_2_4"/>
<dbReference type="OrthoDB" id="9799244at2"/>
<dbReference type="Proteomes" id="UP000000644">
    <property type="component" value="Chromosome"/>
</dbReference>
<dbReference type="GO" id="GO:1990904">
    <property type="term" value="C:ribonucleoprotein complex"/>
    <property type="evidence" value="ECO:0007669"/>
    <property type="project" value="UniProtKB-KW"/>
</dbReference>
<dbReference type="GO" id="GO:0005840">
    <property type="term" value="C:ribosome"/>
    <property type="evidence" value="ECO:0007669"/>
    <property type="project" value="UniProtKB-KW"/>
</dbReference>
<dbReference type="GO" id="GO:0003735">
    <property type="term" value="F:structural constituent of ribosome"/>
    <property type="evidence" value="ECO:0007669"/>
    <property type="project" value="InterPro"/>
</dbReference>
<dbReference type="GO" id="GO:0006412">
    <property type="term" value="P:translation"/>
    <property type="evidence" value="ECO:0007669"/>
    <property type="project" value="UniProtKB-UniRule"/>
</dbReference>
<dbReference type="Gene3D" id="1.20.5.1150">
    <property type="entry name" value="Ribosomal protein S8"/>
    <property type="match status" value="1"/>
</dbReference>
<dbReference type="HAMAP" id="MF_00358">
    <property type="entry name" value="Ribosomal_bS21"/>
    <property type="match status" value="1"/>
</dbReference>
<dbReference type="InterPro" id="IPR001911">
    <property type="entry name" value="Ribosomal_bS21"/>
</dbReference>
<dbReference type="InterPro" id="IPR018278">
    <property type="entry name" value="Ribosomal_bS21_CS"/>
</dbReference>
<dbReference type="InterPro" id="IPR038380">
    <property type="entry name" value="Ribosomal_bS21_sf"/>
</dbReference>
<dbReference type="NCBIfam" id="TIGR00030">
    <property type="entry name" value="S21p"/>
    <property type="match status" value="1"/>
</dbReference>
<dbReference type="PANTHER" id="PTHR21109">
    <property type="entry name" value="MITOCHONDRIAL 28S RIBOSOMAL PROTEIN S21"/>
    <property type="match status" value="1"/>
</dbReference>
<dbReference type="PANTHER" id="PTHR21109:SF22">
    <property type="entry name" value="SMALL RIBOSOMAL SUBUNIT PROTEIN BS21"/>
    <property type="match status" value="1"/>
</dbReference>
<dbReference type="Pfam" id="PF01165">
    <property type="entry name" value="Ribosomal_S21"/>
    <property type="match status" value="1"/>
</dbReference>
<dbReference type="PRINTS" id="PR00976">
    <property type="entry name" value="RIBOSOMALS21"/>
</dbReference>
<dbReference type="PROSITE" id="PS01181">
    <property type="entry name" value="RIBOSOMAL_S21"/>
    <property type="match status" value="1"/>
</dbReference>
<keyword id="KW-1185">Reference proteome</keyword>
<keyword id="KW-0687">Ribonucleoprotein</keyword>
<keyword id="KW-0689">Ribosomal protein</keyword>
<evidence type="ECO:0000255" key="1">
    <source>
        <dbReference type="HAMAP-Rule" id="MF_00358"/>
    </source>
</evidence>
<evidence type="ECO:0000305" key="2"/>
<proteinExistence type="inferred from homology"/>
<comment type="similarity">
    <text evidence="1">Belongs to the bacterial ribosomal protein bS21 family.</text>
</comment>